<organism>
    <name type="scientific">Mycobacterium tuberculosis (strain ATCC 25618 / H37Rv)</name>
    <dbReference type="NCBI Taxonomy" id="83332"/>
    <lineage>
        <taxon>Bacteria</taxon>
        <taxon>Bacillati</taxon>
        <taxon>Actinomycetota</taxon>
        <taxon>Actinomycetes</taxon>
        <taxon>Mycobacteriales</taxon>
        <taxon>Mycobacteriaceae</taxon>
        <taxon>Mycobacterium</taxon>
        <taxon>Mycobacterium tuberculosis complex</taxon>
    </lineage>
</organism>
<keyword id="KW-0002">3D-structure</keyword>
<keyword id="KW-0028">Amino-acid biosynthesis</keyword>
<keyword id="KW-0055">Arginine biosynthesis</keyword>
<keyword id="KW-0067">ATP-binding</keyword>
<keyword id="KW-0963">Cytoplasm</keyword>
<keyword id="KW-0418">Kinase</keyword>
<keyword id="KW-0547">Nucleotide-binding</keyword>
<keyword id="KW-1185">Reference proteome</keyword>
<keyword id="KW-0808">Transferase</keyword>
<evidence type="ECO:0000255" key="1">
    <source>
        <dbReference type="HAMAP-Rule" id="MF_00082"/>
    </source>
</evidence>
<evidence type="ECO:0000269" key="2">
    <source ref="3"/>
</evidence>
<evidence type="ECO:0007829" key="3">
    <source>
        <dbReference type="PDB" id="7NLN"/>
    </source>
</evidence>
<evidence type="ECO:0007829" key="4">
    <source>
        <dbReference type="PDB" id="7NLO"/>
    </source>
</evidence>
<evidence type="ECO:0007829" key="5">
    <source>
        <dbReference type="PDB" id="7NLY"/>
    </source>
</evidence>
<name>ARGB_MYCTU</name>
<sequence length="294" mass="30937">MSRIEALPTHIKAQVLAEALPWLKQLHGKVVVVKYGGNAMTDDTLRRAFAADMAFLRNCGIHPVVVHGGGPQITAMLRRLGIEGDFKGGFRVTTPEVLDVARMVLFGQVGRELVNLINAHGPYAVGITGEDAQLFTAVRRSVTVDGVATDIGLVGDVDQVNTAAMLDLVAAGRIPVVSTLAPDADGVVHNINADTAAAAVAEALGAEKLLMLTDIDGLYTRWPDRDSLVSEIDTGTLAQLLPTLESGMVPKVEACLRAVIGGVPSAHIIDGRVTHCVLVELFTDAGTGTKVVRG</sequence>
<proteinExistence type="evidence at protein level"/>
<gene>
    <name evidence="1" type="primary">argB</name>
    <name type="ordered locus">Rv1654</name>
    <name type="ORF">MTCY06H11.19</name>
</gene>
<dbReference type="EC" id="2.7.2.8" evidence="1"/>
<dbReference type="EMBL" id="AL123456">
    <property type="protein sequence ID" value="CCP44419.1"/>
    <property type="molecule type" value="Genomic_DNA"/>
</dbReference>
<dbReference type="PIR" id="A70621">
    <property type="entry name" value="A70621"/>
</dbReference>
<dbReference type="RefSeq" id="NP_216170.1">
    <property type="nucleotide sequence ID" value="NC_000962.3"/>
</dbReference>
<dbReference type="RefSeq" id="WP_003408161.1">
    <property type="nucleotide sequence ID" value="NZ_NVQJ01000069.1"/>
</dbReference>
<dbReference type="PDB" id="2AP9">
    <property type="method" value="X-ray"/>
    <property type="resolution" value="2.80 A"/>
    <property type="chains" value="A/B/C/D/E/F=4-294"/>
</dbReference>
<dbReference type="PDB" id="7NLF">
    <property type="method" value="X-ray"/>
    <property type="resolution" value="2.08 A"/>
    <property type="chains" value="A=2-294"/>
</dbReference>
<dbReference type="PDB" id="7NLN">
    <property type="method" value="X-ray"/>
    <property type="resolution" value="1.92 A"/>
    <property type="chains" value="A/B=2-294"/>
</dbReference>
<dbReference type="PDB" id="7NLO">
    <property type="method" value="X-ray"/>
    <property type="resolution" value="1.82 A"/>
    <property type="chains" value="A=2-294"/>
</dbReference>
<dbReference type="PDB" id="7NLP">
    <property type="method" value="X-ray"/>
    <property type="resolution" value="2.21 A"/>
    <property type="chains" value="A=2-294"/>
</dbReference>
<dbReference type="PDB" id="7NLQ">
    <property type="method" value="X-ray"/>
    <property type="resolution" value="2.50 A"/>
    <property type="chains" value="A=2-294"/>
</dbReference>
<dbReference type="PDB" id="7NLR">
    <property type="method" value="X-ray"/>
    <property type="resolution" value="2.25 A"/>
    <property type="chains" value="A=2-294"/>
</dbReference>
<dbReference type="PDB" id="7NLS">
    <property type="method" value="X-ray"/>
    <property type="resolution" value="2.65 A"/>
    <property type="chains" value="A=2-294"/>
</dbReference>
<dbReference type="PDB" id="7NLT">
    <property type="method" value="X-ray"/>
    <property type="resolution" value="2.23 A"/>
    <property type="chains" value="A=2-294"/>
</dbReference>
<dbReference type="PDB" id="7NLU">
    <property type="method" value="X-ray"/>
    <property type="resolution" value="2.23 A"/>
    <property type="chains" value="A=2-294"/>
</dbReference>
<dbReference type="PDB" id="7NLW">
    <property type="method" value="X-ray"/>
    <property type="resolution" value="2.32 A"/>
    <property type="chains" value="A=2-294"/>
</dbReference>
<dbReference type="PDB" id="7NLX">
    <property type="method" value="X-ray"/>
    <property type="resolution" value="2.23 A"/>
    <property type="chains" value="A=2-294"/>
</dbReference>
<dbReference type="PDB" id="7NLY">
    <property type="method" value="X-ray"/>
    <property type="resolution" value="2.25 A"/>
    <property type="chains" value="A=2-294"/>
</dbReference>
<dbReference type="PDB" id="7NLZ">
    <property type="method" value="X-ray"/>
    <property type="resolution" value="2.16 A"/>
    <property type="chains" value="A=2-294"/>
</dbReference>
<dbReference type="PDB" id="7NM0">
    <property type="method" value="X-ray"/>
    <property type="resolution" value="2.28 A"/>
    <property type="chains" value="A=2-294"/>
</dbReference>
<dbReference type="PDB" id="7NN7">
    <property type="method" value="X-ray"/>
    <property type="resolution" value="2.17 A"/>
    <property type="chains" value="A=2-294"/>
</dbReference>
<dbReference type="PDB" id="7NN8">
    <property type="method" value="X-ray"/>
    <property type="resolution" value="2.27 A"/>
    <property type="chains" value="A=2-294"/>
</dbReference>
<dbReference type="PDB" id="7NNB">
    <property type="method" value="X-ray"/>
    <property type="resolution" value="2.19 A"/>
    <property type="chains" value="A=2-294"/>
</dbReference>
<dbReference type="PDBsum" id="2AP9"/>
<dbReference type="PDBsum" id="7NLF"/>
<dbReference type="PDBsum" id="7NLN"/>
<dbReference type="PDBsum" id="7NLO"/>
<dbReference type="PDBsum" id="7NLP"/>
<dbReference type="PDBsum" id="7NLQ"/>
<dbReference type="PDBsum" id="7NLR"/>
<dbReference type="PDBsum" id="7NLS"/>
<dbReference type="PDBsum" id="7NLT"/>
<dbReference type="PDBsum" id="7NLU"/>
<dbReference type="PDBsum" id="7NLW"/>
<dbReference type="PDBsum" id="7NLX"/>
<dbReference type="PDBsum" id="7NLY"/>
<dbReference type="PDBsum" id="7NLZ"/>
<dbReference type="PDBsum" id="7NM0"/>
<dbReference type="PDBsum" id="7NN7"/>
<dbReference type="PDBsum" id="7NN8"/>
<dbReference type="PDBsum" id="7NNB"/>
<dbReference type="SMR" id="P9WQ01"/>
<dbReference type="FunCoup" id="P9WQ01">
    <property type="interactions" value="311"/>
</dbReference>
<dbReference type="STRING" id="83332.Rv1654"/>
<dbReference type="PaxDb" id="83332-Rv1654"/>
<dbReference type="DNASU" id="888076"/>
<dbReference type="GeneID" id="888076"/>
<dbReference type="KEGG" id="mtu:Rv1654"/>
<dbReference type="KEGG" id="mtv:RVBD_1654"/>
<dbReference type="TubercuList" id="Rv1654"/>
<dbReference type="eggNOG" id="COG0548">
    <property type="taxonomic scope" value="Bacteria"/>
</dbReference>
<dbReference type="InParanoid" id="P9WQ01"/>
<dbReference type="OrthoDB" id="9803155at2"/>
<dbReference type="PhylomeDB" id="P9WQ01"/>
<dbReference type="UniPathway" id="UPA00068">
    <property type="reaction ID" value="UER00107"/>
</dbReference>
<dbReference type="EvolutionaryTrace" id="P9WQ01"/>
<dbReference type="Proteomes" id="UP000001584">
    <property type="component" value="Chromosome"/>
</dbReference>
<dbReference type="GO" id="GO:0005737">
    <property type="term" value="C:cytoplasm"/>
    <property type="evidence" value="ECO:0007669"/>
    <property type="project" value="UniProtKB-SubCell"/>
</dbReference>
<dbReference type="GO" id="GO:0009274">
    <property type="term" value="C:peptidoglycan-based cell wall"/>
    <property type="evidence" value="ECO:0007005"/>
    <property type="project" value="MTBBASE"/>
</dbReference>
<dbReference type="GO" id="GO:0005886">
    <property type="term" value="C:plasma membrane"/>
    <property type="evidence" value="ECO:0007005"/>
    <property type="project" value="MTBBASE"/>
</dbReference>
<dbReference type="GO" id="GO:0003991">
    <property type="term" value="F:acetylglutamate kinase activity"/>
    <property type="evidence" value="ECO:0000318"/>
    <property type="project" value="GO_Central"/>
</dbReference>
<dbReference type="GO" id="GO:0005524">
    <property type="term" value="F:ATP binding"/>
    <property type="evidence" value="ECO:0007669"/>
    <property type="project" value="UniProtKB-UniRule"/>
</dbReference>
<dbReference type="GO" id="GO:0042450">
    <property type="term" value="P:arginine biosynthetic process via ornithine"/>
    <property type="evidence" value="ECO:0007669"/>
    <property type="project" value="UniProtKB-UniRule"/>
</dbReference>
<dbReference type="GO" id="GO:0006526">
    <property type="term" value="P:L-arginine biosynthetic process"/>
    <property type="evidence" value="ECO:0000318"/>
    <property type="project" value="GO_Central"/>
</dbReference>
<dbReference type="CDD" id="cd04250">
    <property type="entry name" value="AAK_NAGK-C"/>
    <property type="match status" value="1"/>
</dbReference>
<dbReference type="FunFam" id="3.40.1160.10:FF:000015">
    <property type="entry name" value="Acetylglutamate kinase"/>
    <property type="match status" value="1"/>
</dbReference>
<dbReference type="Gene3D" id="3.40.1160.10">
    <property type="entry name" value="Acetylglutamate kinase-like"/>
    <property type="match status" value="1"/>
</dbReference>
<dbReference type="HAMAP" id="MF_00082">
    <property type="entry name" value="ArgB"/>
    <property type="match status" value="1"/>
</dbReference>
<dbReference type="InterPro" id="IPR036393">
    <property type="entry name" value="AceGlu_kinase-like_sf"/>
</dbReference>
<dbReference type="InterPro" id="IPR004662">
    <property type="entry name" value="AcgluKinase_fam"/>
</dbReference>
<dbReference type="InterPro" id="IPR037528">
    <property type="entry name" value="ArgB"/>
</dbReference>
<dbReference type="InterPro" id="IPR001048">
    <property type="entry name" value="Asp/Glu/Uridylate_kinase"/>
</dbReference>
<dbReference type="InterPro" id="IPR001057">
    <property type="entry name" value="Glu/AcGlu_kinase"/>
</dbReference>
<dbReference type="InterPro" id="IPR041727">
    <property type="entry name" value="NAGK-C"/>
</dbReference>
<dbReference type="NCBIfam" id="TIGR00761">
    <property type="entry name" value="argB"/>
    <property type="match status" value="1"/>
</dbReference>
<dbReference type="PANTHER" id="PTHR23342">
    <property type="entry name" value="N-ACETYLGLUTAMATE SYNTHASE"/>
    <property type="match status" value="1"/>
</dbReference>
<dbReference type="PANTHER" id="PTHR23342:SF0">
    <property type="entry name" value="N-ACETYLGLUTAMATE SYNTHASE, MITOCHONDRIAL"/>
    <property type="match status" value="1"/>
</dbReference>
<dbReference type="Pfam" id="PF00696">
    <property type="entry name" value="AA_kinase"/>
    <property type="match status" value="1"/>
</dbReference>
<dbReference type="PIRSF" id="PIRSF000728">
    <property type="entry name" value="NAGK"/>
    <property type="match status" value="1"/>
</dbReference>
<dbReference type="PRINTS" id="PR00474">
    <property type="entry name" value="GLU5KINASE"/>
</dbReference>
<dbReference type="SUPFAM" id="SSF53633">
    <property type="entry name" value="Carbamate kinase-like"/>
    <property type="match status" value="1"/>
</dbReference>
<comment type="function">
    <text evidence="1">Catalyzes the ATP-dependent phosphorylation of N-acetyl-L-glutamate.</text>
</comment>
<comment type="catalytic activity">
    <reaction evidence="1">
        <text>N-acetyl-L-glutamate + ATP = N-acetyl-L-glutamyl 5-phosphate + ADP</text>
        <dbReference type="Rhea" id="RHEA:14629"/>
        <dbReference type="ChEBI" id="CHEBI:30616"/>
        <dbReference type="ChEBI" id="CHEBI:44337"/>
        <dbReference type="ChEBI" id="CHEBI:57936"/>
        <dbReference type="ChEBI" id="CHEBI:456216"/>
        <dbReference type="EC" id="2.7.2.8"/>
    </reaction>
</comment>
<comment type="pathway">
    <text evidence="1">Amino-acid biosynthesis; L-arginine biosynthesis; N(2)-acetyl-L-ornithine from L-glutamate: step 2/4.</text>
</comment>
<comment type="subunit">
    <text evidence="2">Homohexamer.</text>
</comment>
<comment type="subcellular location">
    <subcellularLocation>
        <location evidence="1">Cytoplasm</location>
    </subcellularLocation>
</comment>
<comment type="similarity">
    <text evidence="1">Belongs to the acetylglutamate kinase family. ArgB subfamily.</text>
</comment>
<reference key="1">
    <citation type="journal article" date="1998" name="Nature">
        <title>Deciphering the biology of Mycobacterium tuberculosis from the complete genome sequence.</title>
        <authorList>
            <person name="Cole S.T."/>
            <person name="Brosch R."/>
            <person name="Parkhill J."/>
            <person name="Garnier T."/>
            <person name="Churcher C.M."/>
            <person name="Harris D.E."/>
            <person name="Gordon S.V."/>
            <person name="Eiglmeier K."/>
            <person name="Gas S."/>
            <person name="Barry C.E. III"/>
            <person name="Tekaia F."/>
            <person name="Badcock K."/>
            <person name="Basham D."/>
            <person name="Brown D."/>
            <person name="Chillingworth T."/>
            <person name="Connor R."/>
            <person name="Davies R.M."/>
            <person name="Devlin K."/>
            <person name="Feltwell T."/>
            <person name="Gentles S."/>
            <person name="Hamlin N."/>
            <person name="Holroyd S."/>
            <person name="Hornsby T."/>
            <person name="Jagels K."/>
            <person name="Krogh A."/>
            <person name="McLean J."/>
            <person name="Moule S."/>
            <person name="Murphy L.D."/>
            <person name="Oliver S."/>
            <person name="Osborne J."/>
            <person name="Quail M.A."/>
            <person name="Rajandream M.A."/>
            <person name="Rogers J."/>
            <person name="Rutter S."/>
            <person name="Seeger K."/>
            <person name="Skelton S."/>
            <person name="Squares S."/>
            <person name="Squares R."/>
            <person name="Sulston J.E."/>
            <person name="Taylor K."/>
            <person name="Whitehead S."/>
            <person name="Barrell B.G."/>
        </authorList>
    </citation>
    <scope>NUCLEOTIDE SEQUENCE [LARGE SCALE GENOMIC DNA]</scope>
    <source>
        <strain>ATCC 25618 / H37Rv</strain>
    </source>
</reference>
<reference key="2">
    <citation type="journal article" date="2011" name="Mol. Cell. Proteomics">
        <title>Proteogenomic analysis of Mycobacterium tuberculosis by high resolution mass spectrometry.</title>
        <authorList>
            <person name="Kelkar D.S."/>
            <person name="Kumar D."/>
            <person name="Kumar P."/>
            <person name="Balakrishnan L."/>
            <person name="Muthusamy B."/>
            <person name="Yadav A.K."/>
            <person name="Shrivastava P."/>
            <person name="Marimuthu A."/>
            <person name="Anand S."/>
            <person name="Sundaram H."/>
            <person name="Kingsbury R."/>
            <person name="Harsha H.C."/>
            <person name="Nair B."/>
            <person name="Prasad T.S."/>
            <person name="Chauhan D.S."/>
            <person name="Katoch K."/>
            <person name="Katoch V.M."/>
            <person name="Kumar P."/>
            <person name="Chaerkady R."/>
            <person name="Ramachandran S."/>
            <person name="Dash D."/>
            <person name="Pandey A."/>
        </authorList>
    </citation>
    <scope>IDENTIFICATION BY MASS SPECTROMETRY [LARGE SCALE ANALYSIS]</scope>
    <source>
        <strain>ATCC 25618 / H37Rv</strain>
    </source>
</reference>
<reference key="3">
    <citation type="submission" date="2005-08" db="PDB data bank">
        <title>Crystal structure of acetylglutamate kinase from Mycobacterium tuberculosis CDC1551.</title>
        <authorList>
            <consortium name="New York structural genomics research consortium (NYSGRC)"/>
        </authorList>
    </citation>
    <scope>X-RAY CRYSTALLOGRAPHY (2.80 ANGSTROMS) OF 4-294</scope>
    <scope>SUBUNIT</scope>
</reference>
<protein>
    <recommendedName>
        <fullName evidence="1">Acetylglutamate kinase</fullName>
        <ecNumber evidence="1">2.7.2.8</ecNumber>
    </recommendedName>
    <alternativeName>
        <fullName evidence="1">N-acetyl-L-glutamate 5-phosphotransferase</fullName>
    </alternativeName>
    <alternativeName>
        <fullName evidence="1">NAG kinase</fullName>
        <shortName evidence="1">NAGK</shortName>
    </alternativeName>
</protein>
<accession>P9WQ01</accession>
<accession>L0TA25</accession>
<accession>P0A4Y6</accession>
<accession>P94989</accession>
<feature type="chain" id="PRO_0000112637" description="Acetylglutamate kinase">
    <location>
        <begin position="1"/>
        <end position="294"/>
    </location>
</feature>
<feature type="binding site" evidence="1">
    <location>
        <begin position="69"/>
        <end position="70"/>
    </location>
    <ligand>
        <name>substrate</name>
    </ligand>
</feature>
<feature type="binding site" evidence="1">
    <location>
        <position position="91"/>
    </location>
    <ligand>
        <name>substrate</name>
    </ligand>
</feature>
<feature type="binding site" evidence="1">
    <location>
        <position position="190"/>
    </location>
    <ligand>
        <name>substrate</name>
    </ligand>
</feature>
<feature type="site" description="Transition state stabilizer" evidence="1">
    <location>
        <position position="34"/>
    </location>
</feature>
<feature type="site" description="Transition state stabilizer" evidence="1">
    <location>
        <position position="251"/>
    </location>
</feature>
<feature type="helix" evidence="5">
    <location>
        <begin position="4"/>
        <end position="6"/>
    </location>
</feature>
<feature type="helix" evidence="4">
    <location>
        <begin position="9"/>
        <end position="18"/>
    </location>
</feature>
<feature type="helix" evidence="4">
    <location>
        <begin position="20"/>
        <end position="26"/>
    </location>
</feature>
<feature type="strand" evidence="4">
    <location>
        <begin position="30"/>
        <end position="35"/>
    </location>
</feature>
<feature type="helix" evidence="4">
    <location>
        <begin position="37"/>
        <end position="40"/>
    </location>
</feature>
<feature type="helix" evidence="4">
    <location>
        <begin position="43"/>
        <end position="57"/>
    </location>
</feature>
<feature type="turn" evidence="4">
    <location>
        <begin position="58"/>
        <end position="60"/>
    </location>
</feature>
<feature type="strand" evidence="4">
    <location>
        <begin position="62"/>
        <end position="67"/>
    </location>
</feature>
<feature type="helix" evidence="4">
    <location>
        <begin position="70"/>
        <end position="79"/>
    </location>
</feature>
<feature type="strand" evidence="3">
    <location>
        <begin position="86"/>
        <end position="91"/>
    </location>
</feature>
<feature type="helix" evidence="4">
    <location>
        <begin position="95"/>
        <end position="107"/>
    </location>
</feature>
<feature type="helix" evidence="4">
    <location>
        <begin position="109"/>
        <end position="117"/>
    </location>
</feature>
<feature type="strand" evidence="4">
    <location>
        <begin position="120"/>
        <end position="122"/>
    </location>
</feature>
<feature type="strand" evidence="4">
    <location>
        <begin position="124"/>
        <end position="127"/>
    </location>
</feature>
<feature type="helix" evidence="4">
    <location>
        <begin position="131"/>
        <end position="133"/>
    </location>
</feature>
<feature type="strand" evidence="4">
    <location>
        <begin position="135"/>
        <end position="139"/>
    </location>
</feature>
<feature type="strand" evidence="4">
    <location>
        <begin position="142"/>
        <end position="144"/>
    </location>
</feature>
<feature type="strand" evidence="4">
    <location>
        <begin position="147"/>
        <end position="149"/>
    </location>
</feature>
<feature type="strand" evidence="4">
    <location>
        <begin position="152"/>
        <end position="160"/>
    </location>
</feature>
<feature type="helix" evidence="4">
    <location>
        <begin position="162"/>
        <end position="170"/>
    </location>
</feature>
<feature type="strand" evidence="4">
    <location>
        <begin position="174"/>
        <end position="178"/>
    </location>
</feature>
<feature type="strand" evidence="4">
    <location>
        <begin position="180"/>
        <end position="182"/>
    </location>
</feature>
<feature type="strand" evidence="4">
    <location>
        <begin position="188"/>
        <end position="191"/>
    </location>
</feature>
<feature type="helix" evidence="4">
    <location>
        <begin position="193"/>
        <end position="204"/>
    </location>
</feature>
<feature type="strand" evidence="4">
    <location>
        <begin position="207"/>
        <end position="219"/>
    </location>
</feature>
<feature type="turn" evidence="4">
    <location>
        <begin position="220"/>
        <end position="223"/>
    </location>
</feature>
<feature type="helix" evidence="4">
    <location>
        <begin position="225"/>
        <end position="227"/>
    </location>
</feature>
<feature type="strand" evidence="4">
    <location>
        <begin position="228"/>
        <end position="233"/>
    </location>
</feature>
<feature type="helix" evidence="4">
    <location>
        <begin position="234"/>
        <end position="240"/>
    </location>
</feature>
<feature type="helix" evidence="4">
    <location>
        <begin position="241"/>
        <end position="243"/>
    </location>
</feature>
<feature type="helix" evidence="4">
    <location>
        <begin position="248"/>
        <end position="260"/>
    </location>
</feature>
<feature type="strand" evidence="4">
    <location>
        <begin position="264"/>
        <end position="270"/>
    </location>
</feature>
<feature type="helix" evidence="4">
    <location>
        <begin position="276"/>
        <end position="282"/>
    </location>
</feature>
<feature type="strand" evidence="4">
    <location>
        <begin position="283"/>
        <end position="285"/>
    </location>
</feature>
<feature type="strand" evidence="4">
    <location>
        <begin position="287"/>
        <end position="292"/>
    </location>
</feature>